<keyword id="KW-1003">Cell membrane</keyword>
<keyword id="KW-1015">Disulfide bond</keyword>
<keyword id="KW-0297">G-protein coupled receptor</keyword>
<keyword id="KW-0325">Glycoprotein</keyword>
<keyword id="KW-0449">Lipoprotein</keyword>
<keyword id="KW-0472">Membrane</keyword>
<keyword id="KW-0564">Palmitate</keyword>
<keyword id="KW-0597">Phosphoprotein</keyword>
<keyword id="KW-0675">Receptor</keyword>
<keyword id="KW-0807">Transducer</keyword>
<keyword id="KW-0812">Transmembrane</keyword>
<keyword id="KW-1133">Transmembrane helix</keyword>
<organism>
    <name type="scientific">Microtus montanus</name>
    <name type="common">Montane vole</name>
    <dbReference type="NCBI Taxonomy" id="88450"/>
    <lineage>
        <taxon>Eukaryota</taxon>
        <taxon>Metazoa</taxon>
        <taxon>Chordata</taxon>
        <taxon>Craniata</taxon>
        <taxon>Vertebrata</taxon>
        <taxon>Euteleostomi</taxon>
        <taxon>Mammalia</taxon>
        <taxon>Eutheria</taxon>
        <taxon>Euarchontoglires</taxon>
        <taxon>Glires</taxon>
        <taxon>Rodentia</taxon>
        <taxon>Myomorpha</taxon>
        <taxon>Muroidea</taxon>
        <taxon>Cricetidae</taxon>
        <taxon>Arvicolinae</taxon>
        <taxon>Microtus</taxon>
    </lineage>
</organism>
<name>V1AR_MICMA</name>
<reference key="1">
    <citation type="journal article" date="1999" name="Nature">
        <title>Increased affiliative response to vasopressin in mice expressing the V1a receptor from a monogamous vole.</title>
        <authorList>
            <person name="Young L.J."/>
            <person name="Nilsen R."/>
            <person name="Waymire K.G."/>
            <person name="MacGregor G.R."/>
            <person name="Insel T.R."/>
        </authorList>
    </citation>
    <scope>NUCLEOTIDE SEQUENCE [GENOMIC DNA]</scope>
    <source>
        <tissue>Brain</tissue>
    </source>
</reference>
<reference key="2">
    <citation type="submission" date="2005-05" db="EMBL/GenBank/DDBJ databases">
        <authorList>
            <person name="Young L.J."/>
            <person name="Nilsen R.A."/>
            <person name="Insel T.R."/>
            <person name="Dondaldson Z."/>
        </authorList>
    </citation>
    <scope>SEQUENCE REVISION TO 18</scope>
</reference>
<reference key="3">
    <citation type="journal article" date="2004" name="Nature">
        <title>Enhanced partner preference in a promiscuous species by manipulating the expression of a single gene.</title>
        <authorList>
            <person name="Lim M.M."/>
            <person name="Wang Z."/>
            <person name="Olazabal D.E."/>
            <person name="Ren X."/>
            <person name="Terwilliger E.F."/>
            <person name="Young L.J."/>
        </authorList>
    </citation>
    <scope>ROLE IN SOCIAL BEHAVIOR</scope>
</reference>
<gene>
    <name type="primary">Avpr1a</name>
</gene>
<protein>
    <recommendedName>
        <fullName>Vasopressin V1a receptor</fullName>
        <shortName>V1aR</shortName>
    </recommendedName>
    <alternativeName>
        <fullName>AVPR V1a</fullName>
    </alternativeName>
    <alternativeName>
        <fullName>Antidiuretic hormone receptor 1a</fullName>
    </alternativeName>
    <alternativeName>
        <fullName>Vascular/hepatic-type arginine vasopressin receptor</fullName>
    </alternativeName>
</protein>
<sequence length="420" mass="47461">MSFPRGSYDPAASNSSPRWPLSAEDANSSREAAGHQKGSDPSGDVRNEELAKLEIAVLAVIFVVAVLGNSSVLLALHRTPRKTSRMHLFIRHLSLADLAVAFFQVLPQLCWDITYRFRGPDWLCRVVKHLQVFAMFASAYMLVVMTADRYIAVCHPLKTLQQPARRSRLMIAASWVLSFLLSTPQYFIFSMIEIEVNNGTKTQDCWATFIQPWGTRAYVTWMTSGVFVVPVVILGTCYGFICYHIWRNVRGKTASRQSKGSGEDVAPFHKGLLVTPCVSSVKTISRAKIRTVKMTFVIVTAYILCWAPFFIVQMWSVWDDNFIWTDSENPSITITALLASLNSCCNPWIYMFFSGHLLQDCVQSFPCCQRMVQKFTKDDSDNMSRRQTSYSNNRSPTNSTGTWKDSPKSSRSIRFIPVST</sequence>
<accession>Q9WTV8</accession>
<dbReference type="EMBL" id="AF070010">
    <property type="protein sequence ID" value="AAD20955.2"/>
    <property type="molecule type" value="Genomic_DNA"/>
</dbReference>
<dbReference type="SMR" id="Q9WTV8"/>
<dbReference type="GlyCosmos" id="Q9WTV8">
    <property type="glycosylation" value="2 sites, No reported glycans"/>
</dbReference>
<dbReference type="GO" id="GO:0005886">
    <property type="term" value="C:plasma membrane"/>
    <property type="evidence" value="ECO:0007669"/>
    <property type="project" value="UniProtKB-SubCell"/>
</dbReference>
<dbReference type="GO" id="GO:0042277">
    <property type="term" value="F:peptide binding"/>
    <property type="evidence" value="ECO:0007669"/>
    <property type="project" value="TreeGrafter"/>
</dbReference>
<dbReference type="GO" id="GO:0005000">
    <property type="term" value="F:vasopressin receptor activity"/>
    <property type="evidence" value="ECO:0007669"/>
    <property type="project" value="InterPro"/>
</dbReference>
<dbReference type="GO" id="GO:0032870">
    <property type="term" value="P:cellular response to hormone stimulus"/>
    <property type="evidence" value="ECO:0007669"/>
    <property type="project" value="TreeGrafter"/>
</dbReference>
<dbReference type="GO" id="GO:0060179">
    <property type="term" value="P:male mating behavior"/>
    <property type="evidence" value="ECO:0000315"/>
    <property type="project" value="CACAO"/>
</dbReference>
<dbReference type="GO" id="GO:0045907">
    <property type="term" value="P:positive regulation of vasoconstriction"/>
    <property type="evidence" value="ECO:0007669"/>
    <property type="project" value="TreeGrafter"/>
</dbReference>
<dbReference type="GO" id="GO:0001992">
    <property type="term" value="P:regulation of systemic arterial blood pressure by vasopressin"/>
    <property type="evidence" value="ECO:0007669"/>
    <property type="project" value="TreeGrafter"/>
</dbReference>
<dbReference type="CDD" id="cd15385">
    <property type="entry name" value="7tmA_V1aR"/>
    <property type="match status" value="1"/>
</dbReference>
<dbReference type="FunFam" id="1.20.1070.10:FF:000094">
    <property type="entry name" value="Vasopressin V1a receptor"/>
    <property type="match status" value="1"/>
</dbReference>
<dbReference type="Gene3D" id="1.20.1070.10">
    <property type="entry name" value="Rhodopsin 7-helix transmembrane proteins"/>
    <property type="match status" value="1"/>
</dbReference>
<dbReference type="InterPro" id="IPR000276">
    <property type="entry name" value="GPCR_Rhodpsn"/>
</dbReference>
<dbReference type="InterPro" id="IPR017452">
    <property type="entry name" value="GPCR_Rhodpsn_7TM"/>
</dbReference>
<dbReference type="InterPro" id="IPR015076">
    <property type="entry name" value="V1R_C"/>
</dbReference>
<dbReference type="InterPro" id="IPR001817">
    <property type="entry name" value="Vasoprsn_rcpt"/>
</dbReference>
<dbReference type="InterPro" id="IPR001224">
    <property type="entry name" value="Vprs_V1A_rcpt"/>
</dbReference>
<dbReference type="PANTHER" id="PTHR24241">
    <property type="entry name" value="NEUROPEPTIDE RECEPTOR-RELATED G-PROTEIN COUPLED RECEPTOR"/>
    <property type="match status" value="1"/>
</dbReference>
<dbReference type="PANTHER" id="PTHR24241:SF17">
    <property type="entry name" value="VASOPRESSIN V1A RECEPTOR"/>
    <property type="match status" value="1"/>
</dbReference>
<dbReference type="Pfam" id="PF00001">
    <property type="entry name" value="7tm_1"/>
    <property type="match status" value="1"/>
</dbReference>
<dbReference type="Pfam" id="PF08983">
    <property type="entry name" value="V1R_C"/>
    <property type="match status" value="1"/>
</dbReference>
<dbReference type="PRINTS" id="PR00237">
    <property type="entry name" value="GPCRRHODOPSN"/>
</dbReference>
<dbReference type="PRINTS" id="PR00896">
    <property type="entry name" value="VASOPRESSINR"/>
</dbReference>
<dbReference type="PRINTS" id="PR00752">
    <property type="entry name" value="VASOPRSNV1AR"/>
</dbReference>
<dbReference type="SMART" id="SM01164">
    <property type="entry name" value="DUF1856"/>
    <property type="match status" value="1"/>
</dbReference>
<dbReference type="SUPFAM" id="SSF81321">
    <property type="entry name" value="Family A G protein-coupled receptor-like"/>
    <property type="match status" value="1"/>
</dbReference>
<dbReference type="PROSITE" id="PS00237">
    <property type="entry name" value="G_PROTEIN_RECEP_F1_1"/>
    <property type="match status" value="1"/>
</dbReference>
<dbReference type="PROSITE" id="PS50262">
    <property type="entry name" value="G_PROTEIN_RECEP_F1_2"/>
    <property type="match status" value="1"/>
</dbReference>
<comment type="function">
    <text evidence="6">Receptor for arginine vasopressin. The activity of this receptor is mediated by G proteins which activate a phosphatidyl-inositol-calcium second messenger system. Involved in social memory formation.</text>
</comment>
<comment type="subcellular location">
    <subcellularLocation>
        <location>Cell membrane</location>
        <topology>Multi-pass membrane protein</topology>
    </subcellularLocation>
</comment>
<comment type="miscellaneous">
    <text>In prairie and pine voles, the 5' regulatory region of AVPR1A contains a microsatellite region that is virtually absent from montane and meadow voles. This species-specific microsatellite polymorphism modulates gene expression in a cell-type-dependent manner and generates a great individual variability in the brain expression pattern. This polymorphism is correlated with monogamous social organization.</text>
</comment>
<comment type="miscellaneous">
    <text>Prairie voles exhibit a monogamous social structure in nature, whereas closely related meadow voles are solitary and polygamous. AVPR1A is expressed at higher levels in the ventral forebrain of monogamous than in promiscuous vole species, whereas dopamine receptor distribution is relatively conserved between species. The partner preference formation in the socially promiscuous meadow vole is increased by AVPR1A gene transfer into the ventral forebrain.</text>
</comment>
<comment type="similarity">
    <text evidence="4">Belongs to the G-protein coupled receptor 1 family. Vasopressin/oxytocin receptor subfamily.</text>
</comment>
<comment type="online information" name="Protein Spotlight">
    <link uri="https://www.proteinspotlight.org/back_issues/052"/>
    <text>Nature's philanderers - Issue 52 of November 2004</text>
</comment>
<feature type="chain" id="PRO_0000070198" description="Vasopressin V1a receptor">
    <location>
        <begin position="1"/>
        <end position="420"/>
    </location>
</feature>
<feature type="topological domain" description="Extracellular" evidence="3">
    <location>
        <begin position="1"/>
        <end position="54"/>
    </location>
</feature>
<feature type="transmembrane region" description="Helical; Name=1" evidence="3">
    <location>
        <begin position="55"/>
        <end position="75"/>
    </location>
</feature>
<feature type="topological domain" description="Cytoplasmic" evidence="3">
    <location>
        <begin position="76"/>
        <end position="92"/>
    </location>
</feature>
<feature type="transmembrane region" description="Helical; Name=2" evidence="3">
    <location>
        <begin position="93"/>
        <end position="113"/>
    </location>
</feature>
<feature type="topological domain" description="Extracellular" evidence="3">
    <location>
        <begin position="114"/>
        <end position="125"/>
    </location>
</feature>
<feature type="transmembrane region" description="Helical; Name=3" evidence="3">
    <location>
        <begin position="126"/>
        <end position="146"/>
    </location>
</feature>
<feature type="topological domain" description="Cytoplasmic" evidence="3">
    <location>
        <begin position="147"/>
        <end position="168"/>
    </location>
</feature>
<feature type="transmembrane region" description="Helical; Name=4" evidence="3">
    <location>
        <begin position="169"/>
        <end position="189"/>
    </location>
</feature>
<feature type="topological domain" description="Extracellular" evidence="3">
    <location>
        <begin position="190"/>
        <end position="225"/>
    </location>
</feature>
<feature type="transmembrane region" description="Helical; Name=5" evidence="3">
    <location>
        <begin position="226"/>
        <end position="246"/>
    </location>
</feature>
<feature type="topological domain" description="Cytoplasmic" evidence="3">
    <location>
        <begin position="247"/>
        <end position="294"/>
    </location>
</feature>
<feature type="transmembrane region" description="Helical; Name=6" evidence="3">
    <location>
        <begin position="295"/>
        <end position="315"/>
    </location>
</feature>
<feature type="topological domain" description="Extracellular" evidence="3">
    <location>
        <begin position="316"/>
        <end position="331"/>
    </location>
</feature>
<feature type="transmembrane region" description="Helical; Name=7" evidence="3">
    <location>
        <begin position="332"/>
        <end position="352"/>
    </location>
</feature>
<feature type="topological domain" description="Cytoplasmic" evidence="3">
    <location>
        <begin position="353"/>
        <end position="420"/>
    </location>
</feature>
<feature type="region of interest" description="Disordered" evidence="5">
    <location>
        <begin position="1"/>
        <end position="45"/>
    </location>
</feature>
<feature type="region of interest" description="Disordered" evidence="5">
    <location>
        <begin position="379"/>
        <end position="411"/>
    </location>
</feature>
<feature type="compositionally biased region" description="Basic and acidic residues" evidence="5">
    <location>
        <begin position="32"/>
        <end position="45"/>
    </location>
</feature>
<feature type="compositionally biased region" description="Polar residues" evidence="5">
    <location>
        <begin position="385"/>
        <end position="403"/>
    </location>
</feature>
<feature type="modified residue" description="Phosphoserine" evidence="2">
    <location>
        <position position="406"/>
    </location>
</feature>
<feature type="lipid moiety-binding region" description="S-palmitoyl cysteine" evidence="1">
    <location>
        <position position="367"/>
    </location>
</feature>
<feature type="lipid moiety-binding region" description="S-palmitoyl cysteine" evidence="1">
    <location>
        <position position="368"/>
    </location>
</feature>
<feature type="glycosylation site" description="N-linked (GlcNAc...) asparagine" evidence="3">
    <location>
        <position position="27"/>
    </location>
</feature>
<feature type="glycosylation site" description="N-linked (GlcNAc...) asparagine" evidence="3">
    <location>
        <position position="198"/>
    </location>
</feature>
<feature type="disulfide bond" evidence="4">
    <location>
        <begin position="124"/>
        <end position="205"/>
    </location>
</feature>
<evidence type="ECO:0000250" key="1"/>
<evidence type="ECO:0000250" key="2">
    <source>
        <dbReference type="UniProtKB" id="Q62463"/>
    </source>
</evidence>
<evidence type="ECO:0000255" key="3"/>
<evidence type="ECO:0000255" key="4">
    <source>
        <dbReference type="PROSITE-ProRule" id="PRU00521"/>
    </source>
</evidence>
<evidence type="ECO:0000256" key="5">
    <source>
        <dbReference type="SAM" id="MobiDB-lite"/>
    </source>
</evidence>
<evidence type="ECO:0000269" key="6">
    <source>
    </source>
</evidence>
<proteinExistence type="inferred from homology"/>